<proteinExistence type="evidence at protein level"/>
<feature type="chain" id="PRO_0000068868" description="Rap guanine nucleotide exchange factor 3">
    <location>
        <begin position="1"/>
        <end position="918"/>
    </location>
</feature>
<feature type="domain" description="DEP" evidence="3">
    <location>
        <begin position="110"/>
        <end position="186"/>
    </location>
</feature>
<feature type="domain" description="N-terminal Ras-GEF" evidence="4">
    <location>
        <begin position="384"/>
        <end position="521"/>
    </location>
</feature>
<feature type="domain" description="Ras-GEF" evidence="5">
    <location>
        <begin position="665"/>
        <end position="884"/>
    </location>
</feature>
<feature type="region of interest" description="Interaction with PDE3B" evidence="1">
    <location>
        <begin position="218"/>
        <end position="242"/>
    </location>
</feature>
<feature type="region of interest" description="Disordered" evidence="6">
    <location>
        <begin position="369"/>
        <end position="388"/>
    </location>
</feature>
<feature type="region of interest" description="Interaction with PDE3B" evidence="1">
    <location>
        <begin position="398"/>
        <end position="422"/>
    </location>
</feature>
<feature type="binding site" evidence="2">
    <location>
        <begin position="311"/>
        <end position="314"/>
    </location>
    <ligand>
        <name>3',5'-cyclic AMP</name>
        <dbReference type="ChEBI" id="CHEBI:58165"/>
    </ligand>
</feature>
<feature type="binding site" evidence="2">
    <location>
        <begin position="321"/>
        <end position="322"/>
    </location>
    <ligand>
        <name>3',5'-cyclic AMP</name>
        <dbReference type="ChEBI" id="CHEBI:58165"/>
    </ligand>
</feature>
<feature type="modified residue" description="Phosphoserine" evidence="10">
    <location>
        <position position="79"/>
    </location>
</feature>
<feature type="modified residue" description="Phosphoserine" evidence="10">
    <location>
        <position position="531"/>
    </location>
</feature>
<feature type="modified residue" description="Phosphoserine" evidence="10">
    <location>
        <position position="859"/>
    </location>
</feature>
<feature type="splice variant" id="VSP_007610" description="In isoform 2." evidence="7 8">
    <original>QE</original>
    <variation>ELIHYVLGPQ</variation>
    <location>
        <begin position="688"/>
        <end position="689"/>
    </location>
</feature>
<accession>Q8VCC8</accession>
<accession>Q8BZK9</accession>
<accession>Q8R1R1</accession>
<evidence type="ECO:0000250" key="1"/>
<evidence type="ECO:0000250" key="2">
    <source>
        <dbReference type="UniProtKB" id="O95398"/>
    </source>
</evidence>
<evidence type="ECO:0000255" key="3">
    <source>
        <dbReference type="PROSITE-ProRule" id="PRU00066"/>
    </source>
</evidence>
<evidence type="ECO:0000255" key="4">
    <source>
        <dbReference type="PROSITE-ProRule" id="PRU00135"/>
    </source>
</evidence>
<evidence type="ECO:0000255" key="5">
    <source>
        <dbReference type="PROSITE-ProRule" id="PRU00168"/>
    </source>
</evidence>
<evidence type="ECO:0000256" key="6">
    <source>
        <dbReference type="SAM" id="MobiDB-lite"/>
    </source>
</evidence>
<evidence type="ECO:0000303" key="7">
    <source>
    </source>
</evidence>
<evidence type="ECO:0000303" key="8">
    <source>
    </source>
</evidence>
<evidence type="ECO:0000305" key="9"/>
<evidence type="ECO:0007744" key="10">
    <source>
    </source>
</evidence>
<sequence length="918" mass="103533">MKVSWPGENHWQVGPAVVESPAVGAPQVGGLPDVVPEGTLLNMVLKRMHRPRCCSYQLVFEHRRPSCIQGLRWTPLTNSEDSLDFRVSLEQATTEHVHKAGKLLHRHLLATYPTLIRDRKYHLRLYRHCCSGRELVDGILALGLGVHSRSQAVGICQVLLDEGALCHVKHDWTFQDRDAQFYRFPGPEPEPTGTQDVEEELVEAMALLSQRGPDALLTVALRKPPGQRTDEELDLIFEELLHIKAVAHLSNSVKRELAAVLLFEPHSKAGTVLFSQGDKGTSWYIIWKGSVNVVTHGKGLVTTLHEGDDFGQLALVNDAPRAATIILRENNCHFLRVDKQDFNRIIKDVEAKTMRLEEHGKVVLVLERTSQGAGPSRPPTPGRNRYTVMSGTPEKILELLLEAMRPDSSAHDPTETFLSDFLLTHSVFMPSTQLFTALLHHFHVEPADPAGGSEQEHSTYICNKRQQILRLVGRWVALYSPMLHSDPVATSFLQKLSDLVSRDARLSNLLREQYPERRRHHRLENGCGNVSPQTKARNAPVWLPNQEEPLPSSAGAIRVGDKVPYDICRPDHSVLTLHLPVTASVREVMAALAHEDHWTKGQVLVKVNSAGDVVGLQPDARGVATSLGLNERLFVVDPQEVHELTPHPEQLGPTLGSSEMLDLVSAKDLAGQLTDHDWNLFNRIHQVQEHLRDVTTANLERFMRRFNELQYWVATELCLCPVPGSRAQLLRKFIKLAAHLKEQKNLNSFFAVMFGLSNSAISRLAHTWERLPHKVRKLYSALERLLDPSWNHRVYRLALTKLSPPVIPFMPLLLKDVTFIHEGNHTLVENLINFEKMRMMARAVRMLHHCRSHSTAPLSPLRSRVSHIHEDSQGSRISTCSEQSLSTRSPASTWAYVQQLKVIDNQRELSRLSRELEP</sequence>
<dbReference type="EMBL" id="BC020532">
    <property type="protein sequence ID" value="AAH20532.1"/>
    <property type="status" value="ALT_INIT"/>
    <property type="molecule type" value="mRNA"/>
</dbReference>
<dbReference type="EMBL" id="BC020311">
    <property type="protein sequence ID" value="AAH20311.1"/>
    <property type="molecule type" value="mRNA"/>
</dbReference>
<dbReference type="EMBL" id="AK034265">
    <property type="protein sequence ID" value="BAC28653.1"/>
    <property type="molecule type" value="mRNA"/>
</dbReference>
<dbReference type="CCDS" id="CCDS37187.2">
    <molecule id="Q8VCC8-1"/>
</dbReference>
<dbReference type="CCDS" id="CCDS49714.1">
    <molecule id="Q8VCC8-2"/>
</dbReference>
<dbReference type="RefSeq" id="NP_001171281.1">
    <molecule id="Q8VCC8-2"/>
    <property type="nucleotide sequence ID" value="NM_001177810.1"/>
</dbReference>
<dbReference type="RefSeq" id="NP_001171282.1">
    <property type="nucleotide sequence ID" value="NM_001177811.1"/>
</dbReference>
<dbReference type="RefSeq" id="NP_659099.2">
    <molecule id="Q8VCC8-1"/>
    <property type="nucleotide sequence ID" value="NM_144850.2"/>
</dbReference>
<dbReference type="RefSeq" id="XP_030104383.1">
    <molecule id="Q8VCC8-2"/>
    <property type="nucleotide sequence ID" value="XM_030248523.2"/>
</dbReference>
<dbReference type="SMR" id="Q8VCC8"/>
<dbReference type="BioGRID" id="230205">
    <property type="interactions" value="1"/>
</dbReference>
<dbReference type="FunCoup" id="Q8VCC8">
    <property type="interactions" value="543"/>
</dbReference>
<dbReference type="IntAct" id="Q8VCC8">
    <property type="interactions" value="1"/>
</dbReference>
<dbReference type="STRING" id="10090.ENSMUSP00000116426"/>
<dbReference type="GlyGen" id="Q8VCC8">
    <property type="glycosylation" value="1 site"/>
</dbReference>
<dbReference type="iPTMnet" id="Q8VCC8"/>
<dbReference type="PhosphoSitePlus" id="Q8VCC8"/>
<dbReference type="PaxDb" id="10090-ENSMUSP00000116426"/>
<dbReference type="ProteomicsDB" id="299944">
    <molecule id="Q8VCC8-1"/>
</dbReference>
<dbReference type="ProteomicsDB" id="299945">
    <molecule id="Q8VCC8-2"/>
</dbReference>
<dbReference type="Antibodypedia" id="3824">
    <property type="antibodies" value="276 antibodies from 38 providers"/>
</dbReference>
<dbReference type="DNASU" id="223864"/>
<dbReference type="Ensembl" id="ENSMUST00000126854.9">
    <molecule id="Q8VCC8-2"/>
    <property type="protein sequence ID" value="ENSMUSP00000116426.3"/>
    <property type="gene ID" value="ENSMUSG00000022469.18"/>
</dbReference>
<dbReference type="Ensembl" id="ENSMUST00000129223.9">
    <molecule id="Q8VCC8-1"/>
    <property type="protein sequence ID" value="ENSMUSP00000118148.3"/>
    <property type="gene ID" value="ENSMUSG00000022469.18"/>
</dbReference>
<dbReference type="GeneID" id="223864"/>
<dbReference type="KEGG" id="mmu:223864"/>
<dbReference type="UCSC" id="uc007xkz.2">
    <molecule id="Q8VCC8-2"/>
    <property type="organism name" value="mouse"/>
</dbReference>
<dbReference type="UCSC" id="uc007xla.2">
    <molecule id="Q8VCC8-1"/>
    <property type="organism name" value="mouse"/>
</dbReference>
<dbReference type="AGR" id="MGI:2441741"/>
<dbReference type="CTD" id="10411"/>
<dbReference type="MGI" id="MGI:2441741">
    <property type="gene designation" value="Rapgef3"/>
</dbReference>
<dbReference type="VEuPathDB" id="HostDB:ENSMUSG00000022469"/>
<dbReference type="eggNOG" id="KOG2378">
    <property type="taxonomic scope" value="Eukaryota"/>
</dbReference>
<dbReference type="GeneTree" id="ENSGT00940000159931"/>
<dbReference type="InParanoid" id="Q8VCC8"/>
<dbReference type="OMA" id="EKQTIRG"/>
<dbReference type="PhylomeDB" id="Q8VCC8"/>
<dbReference type="TreeFam" id="TF313184"/>
<dbReference type="Reactome" id="R-MMU-354192">
    <property type="pathway name" value="Integrin signaling"/>
</dbReference>
<dbReference type="Reactome" id="R-MMU-381676">
    <property type="pathway name" value="Glucagon-like Peptide-1 (GLP1) regulates insulin secretion"/>
</dbReference>
<dbReference type="Reactome" id="R-MMU-392517">
    <property type="pathway name" value="Rap1 signalling"/>
</dbReference>
<dbReference type="Reactome" id="R-MMU-422356">
    <property type="pathway name" value="Regulation of insulin secretion"/>
</dbReference>
<dbReference type="BioGRID-ORCS" id="223864">
    <property type="hits" value="3 hits in 77 CRISPR screens"/>
</dbReference>
<dbReference type="ChiTaRS" id="Rapgef3">
    <property type="organism name" value="mouse"/>
</dbReference>
<dbReference type="PRO" id="PR:Q8VCC8"/>
<dbReference type="Proteomes" id="UP000000589">
    <property type="component" value="Chromosome 15"/>
</dbReference>
<dbReference type="RNAct" id="Q8VCC8">
    <property type="molecule type" value="protein"/>
</dbReference>
<dbReference type="Bgee" id="ENSMUSG00000022469">
    <property type="expression patterns" value="Expressed in aortic valve and 220 other cell types or tissues"/>
</dbReference>
<dbReference type="ExpressionAtlas" id="Q8VCC8">
    <property type="expression patterns" value="baseline and differential"/>
</dbReference>
<dbReference type="GO" id="GO:0030864">
    <property type="term" value="C:cortical actin cytoskeleton"/>
    <property type="evidence" value="ECO:0007669"/>
    <property type="project" value="Ensembl"/>
</dbReference>
<dbReference type="GO" id="GO:0030175">
    <property type="term" value="C:filopodium"/>
    <property type="evidence" value="ECO:0007669"/>
    <property type="project" value="Ensembl"/>
</dbReference>
<dbReference type="GO" id="GO:0030027">
    <property type="term" value="C:lamellipodium"/>
    <property type="evidence" value="ECO:0007669"/>
    <property type="project" value="Ensembl"/>
</dbReference>
<dbReference type="GO" id="GO:0005902">
    <property type="term" value="C:microvillus"/>
    <property type="evidence" value="ECO:0007669"/>
    <property type="project" value="Ensembl"/>
</dbReference>
<dbReference type="GO" id="GO:0005886">
    <property type="term" value="C:plasma membrane"/>
    <property type="evidence" value="ECO:0007669"/>
    <property type="project" value="Ensembl"/>
</dbReference>
<dbReference type="GO" id="GO:0030552">
    <property type="term" value="F:cAMP binding"/>
    <property type="evidence" value="ECO:0007669"/>
    <property type="project" value="UniProtKB-KW"/>
</dbReference>
<dbReference type="GO" id="GO:0005085">
    <property type="term" value="F:guanyl-nucleotide exchange factor activity"/>
    <property type="evidence" value="ECO:0000314"/>
    <property type="project" value="MGI"/>
</dbReference>
<dbReference type="GO" id="GO:0019904">
    <property type="term" value="F:protein domain specific binding"/>
    <property type="evidence" value="ECO:0007669"/>
    <property type="project" value="Ensembl"/>
</dbReference>
<dbReference type="GO" id="GO:0001525">
    <property type="term" value="P:angiogenesis"/>
    <property type="evidence" value="ECO:0007669"/>
    <property type="project" value="UniProtKB-KW"/>
</dbReference>
<dbReference type="GO" id="GO:0008306">
    <property type="term" value="P:associative learning"/>
    <property type="evidence" value="ECO:0000315"/>
    <property type="project" value="MGI"/>
</dbReference>
<dbReference type="GO" id="GO:0071320">
    <property type="term" value="P:cellular response to cAMP"/>
    <property type="evidence" value="ECO:0000250"/>
    <property type="project" value="UniProtKB"/>
</dbReference>
<dbReference type="GO" id="GO:0061028">
    <property type="term" value="P:establishment of endothelial barrier"/>
    <property type="evidence" value="ECO:0000250"/>
    <property type="project" value="UniProtKB"/>
</dbReference>
<dbReference type="GO" id="GO:0034242">
    <property type="term" value="P:negative regulation of syncytium formation by plasma membrane fusion"/>
    <property type="evidence" value="ECO:0007669"/>
    <property type="project" value="Ensembl"/>
</dbReference>
<dbReference type="GO" id="GO:0045766">
    <property type="term" value="P:positive regulation of angiogenesis"/>
    <property type="evidence" value="ECO:0000250"/>
    <property type="project" value="UniProtKB"/>
</dbReference>
<dbReference type="GO" id="GO:0043547">
    <property type="term" value="P:positive regulation of GTPase activity"/>
    <property type="evidence" value="ECO:0000250"/>
    <property type="project" value="UniProtKB"/>
</dbReference>
<dbReference type="GO" id="GO:0046827">
    <property type="term" value="P:positive regulation of protein export from nucleus"/>
    <property type="evidence" value="ECO:0007669"/>
    <property type="project" value="Ensembl"/>
</dbReference>
<dbReference type="GO" id="GO:0051496">
    <property type="term" value="P:positive regulation of stress fiber assembly"/>
    <property type="evidence" value="ECO:0000250"/>
    <property type="project" value="UniProtKB"/>
</dbReference>
<dbReference type="GO" id="GO:0060143">
    <property type="term" value="P:positive regulation of syncytium formation by plasma membrane fusion"/>
    <property type="evidence" value="ECO:0007669"/>
    <property type="project" value="Ensembl"/>
</dbReference>
<dbReference type="GO" id="GO:0032486">
    <property type="term" value="P:Rap protein signal transduction"/>
    <property type="evidence" value="ECO:0000250"/>
    <property type="project" value="UniProtKB"/>
</dbReference>
<dbReference type="GO" id="GO:0032956">
    <property type="term" value="P:regulation of actin cytoskeleton organization"/>
    <property type="evidence" value="ECO:0000250"/>
    <property type="project" value="UniProtKB"/>
</dbReference>
<dbReference type="GO" id="GO:0051896">
    <property type="term" value="P:regulation of phosphatidylinositol 3-kinase/protein kinase B signal transduction"/>
    <property type="evidence" value="ECO:0007669"/>
    <property type="project" value="Ensembl"/>
</dbReference>
<dbReference type="CDD" id="cd00038">
    <property type="entry name" value="CAP_ED"/>
    <property type="match status" value="1"/>
</dbReference>
<dbReference type="CDD" id="cd04437">
    <property type="entry name" value="DEP_Epac"/>
    <property type="match status" value="1"/>
</dbReference>
<dbReference type="CDD" id="cd00155">
    <property type="entry name" value="RasGEF"/>
    <property type="match status" value="1"/>
</dbReference>
<dbReference type="CDD" id="cd06224">
    <property type="entry name" value="REM"/>
    <property type="match status" value="1"/>
</dbReference>
<dbReference type="FunFam" id="3.10.20.90:FF:000192">
    <property type="entry name" value="Rap guanine nucleotide exchange factor (GEF) 3"/>
    <property type="match status" value="1"/>
</dbReference>
<dbReference type="FunFam" id="1.10.8.1240:FF:000001">
    <property type="entry name" value="Rap guanine nucleotide exchange factor (GEF) 4"/>
    <property type="match status" value="1"/>
</dbReference>
<dbReference type="FunFam" id="1.10.840.10:FF:000002">
    <property type="entry name" value="Rap guanine nucleotide exchange factor 4"/>
    <property type="match status" value="1"/>
</dbReference>
<dbReference type="FunFam" id="2.60.120.10:FF:000015">
    <property type="entry name" value="Rap guanine nucleotide exchange factor 4"/>
    <property type="match status" value="1"/>
</dbReference>
<dbReference type="Gene3D" id="1.10.8.1240">
    <property type="match status" value="1"/>
</dbReference>
<dbReference type="Gene3D" id="2.60.120.10">
    <property type="entry name" value="Jelly Rolls"/>
    <property type="match status" value="1"/>
</dbReference>
<dbReference type="Gene3D" id="3.10.20.90">
    <property type="entry name" value="Phosphatidylinositol 3-kinase Catalytic Subunit, Chain A, domain 1"/>
    <property type="match status" value="1"/>
</dbReference>
<dbReference type="Gene3D" id="1.10.840.10">
    <property type="entry name" value="Ras guanine-nucleotide exchange factors catalytic domain"/>
    <property type="match status" value="1"/>
</dbReference>
<dbReference type="Gene3D" id="1.20.870.10">
    <property type="entry name" value="Son of sevenless (SoS) protein Chain: S domain 1"/>
    <property type="match status" value="1"/>
</dbReference>
<dbReference type="Gene3D" id="1.10.10.10">
    <property type="entry name" value="Winged helix-like DNA-binding domain superfamily/Winged helix DNA-binding domain"/>
    <property type="match status" value="1"/>
</dbReference>
<dbReference type="InterPro" id="IPR000595">
    <property type="entry name" value="cNMP-bd_dom"/>
</dbReference>
<dbReference type="InterPro" id="IPR018490">
    <property type="entry name" value="cNMP-bd_dom_sf"/>
</dbReference>
<dbReference type="InterPro" id="IPR000591">
    <property type="entry name" value="DEP_dom"/>
</dbReference>
<dbReference type="InterPro" id="IPR008937">
    <property type="entry name" value="Ras-like_GEF"/>
</dbReference>
<dbReference type="InterPro" id="IPR000651">
    <property type="entry name" value="Ras-like_Gua-exchang_fac_N"/>
</dbReference>
<dbReference type="InterPro" id="IPR019804">
    <property type="entry name" value="Ras_G-nucl-exch_fac_CS"/>
</dbReference>
<dbReference type="InterPro" id="IPR023578">
    <property type="entry name" value="Ras_GEF_dom_sf"/>
</dbReference>
<dbReference type="InterPro" id="IPR001895">
    <property type="entry name" value="RASGEF_cat_dom"/>
</dbReference>
<dbReference type="InterPro" id="IPR036964">
    <property type="entry name" value="RASGEF_cat_dom_sf"/>
</dbReference>
<dbReference type="InterPro" id="IPR014710">
    <property type="entry name" value="RmlC-like_jellyroll"/>
</dbReference>
<dbReference type="InterPro" id="IPR029071">
    <property type="entry name" value="Ubiquitin-like_domsf"/>
</dbReference>
<dbReference type="InterPro" id="IPR036388">
    <property type="entry name" value="WH-like_DNA-bd_sf"/>
</dbReference>
<dbReference type="InterPro" id="IPR036390">
    <property type="entry name" value="WH_DNA-bd_sf"/>
</dbReference>
<dbReference type="PANTHER" id="PTHR23113">
    <property type="entry name" value="GUANINE NUCLEOTIDE EXCHANGE FACTOR"/>
    <property type="match status" value="1"/>
</dbReference>
<dbReference type="PANTHER" id="PTHR23113:SF24">
    <property type="entry name" value="RAP GUANINE NUCLEOTIDE EXCHANGE FACTOR 3"/>
    <property type="match status" value="1"/>
</dbReference>
<dbReference type="Pfam" id="PF00027">
    <property type="entry name" value="cNMP_binding"/>
    <property type="match status" value="1"/>
</dbReference>
<dbReference type="Pfam" id="PF00610">
    <property type="entry name" value="DEP"/>
    <property type="match status" value="1"/>
</dbReference>
<dbReference type="Pfam" id="PF00617">
    <property type="entry name" value="RasGEF"/>
    <property type="match status" value="1"/>
</dbReference>
<dbReference type="Pfam" id="PF00618">
    <property type="entry name" value="RasGEF_N"/>
    <property type="match status" value="1"/>
</dbReference>
<dbReference type="PRINTS" id="PR00103">
    <property type="entry name" value="CAMPKINASE"/>
</dbReference>
<dbReference type="SMART" id="SM00100">
    <property type="entry name" value="cNMP"/>
    <property type="match status" value="1"/>
</dbReference>
<dbReference type="SMART" id="SM00049">
    <property type="entry name" value="DEP"/>
    <property type="match status" value="1"/>
</dbReference>
<dbReference type="SMART" id="SM00147">
    <property type="entry name" value="RasGEF"/>
    <property type="match status" value="1"/>
</dbReference>
<dbReference type="SMART" id="SM00229">
    <property type="entry name" value="RasGEFN"/>
    <property type="match status" value="1"/>
</dbReference>
<dbReference type="SUPFAM" id="SSF51206">
    <property type="entry name" value="cAMP-binding domain-like"/>
    <property type="match status" value="1"/>
</dbReference>
<dbReference type="SUPFAM" id="SSF48366">
    <property type="entry name" value="Ras GEF"/>
    <property type="match status" value="1"/>
</dbReference>
<dbReference type="SUPFAM" id="SSF54236">
    <property type="entry name" value="Ubiquitin-like"/>
    <property type="match status" value="1"/>
</dbReference>
<dbReference type="SUPFAM" id="SSF46785">
    <property type="entry name" value="Winged helix' DNA-binding domain"/>
    <property type="match status" value="1"/>
</dbReference>
<dbReference type="PROSITE" id="PS50042">
    <property type="entry name" value="CNMP_BINDING_3"/>
    <property type="match status" value="1"/>
</dbReference>
<dbReference type="PROSITE" id="PS50186">
    <property type="entry name" value="DEP"/>
    <property type="match status" value="1"/>
</dbReference>
<dbReference type="PROSITE" id="PS00720">
    <property type="entry name" value="RASGEF"/>
    <property type="match status" value="1"/>
</dbReference>
<dbReference type="PROSITE" id="PS50009">
    <property type="entry name" value="RASGEF_CAT"/>
    <property type="match status" value="1"/>
</dbReference>
<dbReference type="PROSITE" id="PS50212">
    <property type="entry name" value="RASGEF_NTER"/>
    <property type="match status" value="1"/>
</dbReference>
<reference key="1">
    <citation type="journal article" date="2004" name="Genome Res.">
        <title>The status, quality, and expansion of the NIH full-length cDNA project: the Mammalian Gene Collection (MGC).</title>
        <authorList>
            <consortium name="The MGC Project Team"/>
        </authorList>
    </citation>
    <scope>NUCLEOTIDE SEQUENCE [LARGE SCALE MRNA] (ISOFORM 1)</scope>
    <scope>NUCLEOTIDE SEQUENCE [LARGE SCALE MRNA] OF 640-918 (ISOFORM 2)</scope>
    <source>
        <tissue>Kidney</tissue>
    </source>
</reference>
<reference key="2">
    <citation type="journal article" date="2005" name="Science">
        <title>The transcriptional landscape of the mammalian genome.</title>
        <authorList>
            <person name="Carninci P."/>
            <person name="Kasukawa T."/>
            <person name="Katayama S."/>
            <person name="Gough J."/>
            <person name="Frith M.C."/>
            <person name="Maeda N."/>
            <person name="Oyama R."/>
            <person name="Ravasi T."/>
            <person name="Lenhard B."/>
            <person name="Wells C."/>
            <person name="Kodzius R."/>
            <person name="Shimokawa K."/>
            <person name="Bajic V.B."/>
            <person name="Brenner S.E."/>
            <person name="Batalov S."/>
            <person name="Forrest A.R."/>
            <person name="Zavolan M."/>
            <person name="Davis M.J."/>
            <person name="Wilming L.G."/>
            <person name="Aidinis V."/>
            <person name="Allen J.E."/>
            <person name="Ambesi-Impiombato A."/>
            <person name="Apweiler R."/>
            <person name="Aturaliya R.N."/>
            <person name="Bailey T.L."/>
            <person name="Bansal M."/>
            <person name="Baxter L."/>
            <person name="Beisel K.W."/>
            <person name="Bersano T."/>
            <person name="Bono H."/>
            <person name="Chalk A.M."/>
            <person name="Chiu K.P."/>
            <person name="Choudhary V."/>
            <person name="Christoffels A."/>
            <person name="Clutterbuck D.R."/>
            <person name="Crowe M.L."/>
            <person name="Dalla E."/>
            <person name="Dalrymple B.P."/>
            <person name="de Bono B."/>
            <person name="Della Gatta G."/>
            <person name="di Bernardo D."/>
            <person name="Down T."/>
            <person name="Engstrom P."/>
            <person name="Fagiolini M."/>
            <person name="Faulkner G."/>
            <person name="Fletcher C.F."/>
            <person name="Fukushima T."/>
            <person name="Furuno M."/>
            <person name="Futaki S."/>
            <person name="Gariboldi M."/>
            <person name="Georgii-Hemming P."/>
            <person name="Gingeras T.R."/>
            <person name="Gojobori T."/>
            <person name="Green R.E."/>
            <person name="Gustincich S."/>
            <person name="Harbers M."/>
            <person name="Hayashi Y."/>
            <person name="Hensch T.K."/>
            <person name="Hirokawa N."/>
            <person name="Hill D."/>
            <person name="Huminiecki L."/>
            <person name="Iacono M."/>
            <person name="Ikeo K."/>
            <person name="Iwama A."/>
            <person name="Ishikawa T."/>
            <person name="Jakt M."/>
            <person name="Kanapin A."/>
            <person name="Katoh M."/>
            <person name="Kawasawa Y."/>
            <person name="Kelso J."/>
            <person name="Kitamura H."/>
            <person name="Kitano H."/>
            <person name="Kollias G."/>
            <person name="Krishnan S.P."/>
            <person name="Kruger A."/>
            <person name="Kummerfeld S.K."/>
            <person name="Kurochkin I.V."/>
            <person name="Lareau L.F."/>
            <person name="Lazarevic D."/>
            <person name="Lipovich L."/>
            <person name="Liu J."/>
            <person name="Liuni S."/>
            <person name="McWilliam S."/>
            <person name="Madan Babu M."/>
            <person name="Madera M."/>
            <person name="Marchionni L."/>
            <person name="Matsuda H."/>
            <person name="Matsuzawa S."/>
            <person name="Miki H."/>
            <person name="Mignone F."/>
            <person name="Miyake S."/>
            <person name="Morris K."/>
            <person name="Mottagui-Tabar S."/>
            <person name="Mulder N."/>
            <person name="Nakano N."/>
            <person name="Nakauchi H."/>
            <person name="Ng P."/>
            <person name="Nilsson R."/>
            <person name="Nishiguchi S."/>
            <person name="Nishikawa S."/>
            <person name="Nori F."/>
            <person name="Ohara O."/>
            <person name="Okazaki Y."/>
            <person name="Orlando V."/>
            <person name="Pang K.C."/>
            <person name="Pavan W.J."/>
            <person name="Pavesi G."/>
            <person name="Pesole G."/>
            <person name="Petrovsky N."/>
            <person name="Piazza S."/>
            <person name="Reed J."/>
            <person name="Reid J.F."/>
            <person name="Ring B.Z."/>
            <person name="Ringwald M."/>
            <person name="Rost B."/>
            <person name="Ruan Y."/>
            <person name="Salzberg S.L."/>
            <person name="Sandelin A."/>
            <person name="Schneider C."/>
            <person name="Schoenbach C."/>
            <person name="Sekiguchi K."/>
            <person name="Semple C.A."/>
            <person name="Seno S."/>
            <person name="Sessa L."/>
            <person name="Sheng Y."/>
            <person name="Shibata Y."/>
            <person name="Shimada H."/>
            <person name="Shimada K."/>
            <person name="Silva D."/>
            <person name="Sinclair B."/>
            <person name="Sperling S."/>
            <person name="Stupka E."/>
            <person name="Sugiura K."/>
            <person name="Sultana R."/>
            <person name="Takenaka Y."/>
            <person name="Taki K."/>
            <person name="Tammoja K."/>
            <person name="Tan S.L."/>
            <person name="Tang S."/>
            <person name="Taylor M.S."/>
            <person name="Tegner J."/>
            <person name="Teichmann S.A."/>
            <person name="Ueda H.R."/>
            <person name="van Nimwegen E."/>
            <person name="Verardo R."/>
            <person name="Wei C.L."/>
            <person name="Yagi K."/>
            <person name="Yamanishi H."/>
            <person name="Zabarovsky E."/>
            <person name="Zhu S."/>
            <person name="Zimmer A."/>
            <person name="Hide W."/>
            <person name="Bult C."/>
            <person name="Grimmond S.M."/>
            <person name="Teasdale R.D."/>
            <person name="Liu E.T."/>
            <person name="Brusic V."/>
            <person name="Quackenbush J."/>
            <person name="Wahlestedt C."/>
            <person name="Mattick J.S."/>
            <person name="Hume D.A."/>
            <person name="Kai C."/>
            <person name="Sasaki D."/>
            <person name="Tomaru Y."/>
            <person name="Fukuda S."/>
            <person name="Kanamori-Katayama M."/>
            <person name="Suzuki M."/>
            <person name="Aoki J."/>
            <person name="Arakawa T."/>
            <person name="Iida J."/>
            <person name="Imamura K."/>
            <person name="Itoh M."/>
            <person name="Kato T."/>
            <person name="Kawaji H."/>
            <person name="Kawagashira N."/>
            <person name="Kawashima T."/>
            <person name="Kojima M."/>
            <person name="Kondo S."/>
            <person name="Konno H."/>
            <person name="Nakano K."/>
            <person name="Ninomiya N."/>
            <person name="Nishio T."/>
            <person name="Okada M."/>
            <person name="Plessy C."/>
            <person name="Shibata K."/>
            <person name="Shiraki T."/>
            <person name="Suzuki S."/>
            <person name="Tagami M."/>
            <person name="Waki K."/>
            <person name="Watahiki A."/>
            <person name="Okamura-Oho Y."/>
            <person name="Suzuki H."/>
            <person name="Kawai J."/>
            <person name="Hayashizaki Y."/>
        </authorList>
    </citation>
    <scope>NUCLEOTIDE SEQUENCE [LARGE SCALE MRNA] OF 466-918 (ISOFORM 2)</scope>
    <source>
        <strain>C57BL/6J</strain>
        <tissue>Diencephalon</tissue>
    </source>
</reference>
<reference key="3">
    <citation type="journal article" date="2010" name="Cell">
        <title>A tissue-specific atlas of mouse protein phosphorylation and expression.</title>
        <authorList>
            <person name="Huttlin E.L."/>
            <person name="Jedrychowski M.P."/>
            <person name="Elias J.E."/>
            <person name="Goswami T."/>
            <person name="Rad R."/>
            <person name="Beausoleil S.A."/>
            <person name="Villen J."/>
            <person name="Haas W."/>
            <person name="Sowa M.E."/>
            <person name="Gygi S.P."/>
        </authorList>
    </citation>
    <scope>PHOSPHORYLATION [LARGE SCALE ANALYSIS] AT SER-79; SER-531 AND SER-859</scope>
    <scope>IDENTIFICATION BY MASS SPECTROMETRY [LARGE SCALE ANALYSIS]</scope>
    <source>
        <tissue>Kidney</tissue>
        <tissue>Pancreas</tissue>
    </source>
</reference>
<organism>
    <name type="scientific">Mus musculus</name>
    <name type="common">Mouse</name>
    <dbReference type="NCBI Taxonomy" id="10090"/>
    <lineage>
        <taxon>Eukaryota</taxon>
        <taxon>Metazoa</taxon>
        <taxon>Chordata</taxon>
        <taxon>Craniata</taxon>
        <taxon>Vertebrata</taxon>
        <taxon>Euteleostomi</taxon>
        <taxon>Mammalia</taxon>
        <taxon>Eutheria</taxon>
        <taxon>Euarchontoglires</taxon>
        <taxon>Glires</taxon>
        <taxon>Rodentia</taxon>
        <taxon>Myomorpha</taxon>
        <taxon>Muroidea</taxon>
        <taxon>Muridae</taxon>
        <taxon>Murinae</taxon>
        <taxon>Mus</taxon>
        <taxon>Mus</taxon>
    </lineage>
</organism>
<name>RPGF3_MOUSE</name>
<keyword id="KW-0025">Alternative splicing</keyword>
<keyword id="KW-0037">Angiogenesis</keyword>
<keyword id="KW-0114">cAMP</keyword>
<keyword id="KW-0116">cAMP-binding</keyword>
<keyword id="KW-0963">Cytoplasm</keyword>
<keyword id="KW-0344">Guanine-nucleotide releasing factor</keyword>
<keyword id="KW-0472">Membrane</keyword>
<keyword id="KW-0547">Nucleotide-binding</keyword>
<keyword id="KW-0597">Phosphoprotein</keyword>
<keyword id="KW-1185">Reference proteome</keyword>
<protein>
    <recommendedName>
        <fullName>Rap guanine nucleotide exchange factor 3</fullName>
    </recommendedName>
    <alternativeName>
        <fullName>Exchange factor directly activated by cAMP 1</fullName>
    </alternativeName>
    <alternativeName>
        <fullName>Exchange protein directly activated by cAMP 1</fullName>
        <shortName>EPAC 1</shortName>
    </alternativeName>
    <alternativeName>
        <fullName>cAMP-regulated guanine nucleotide exchange factor I</fullName>
        <shortName>cAMP-GEFI</shortName>
    </alternativeName>
</protein>
<comment type="function">
    <text evidence="1">Guanine nucleotide exchange factor (GEF) for RAP1A and RAP2A small GTPases that is activated by binding cAMP. Through simultaneous binding of PDE3B to RAPGEF3 and PIK3R6 is assembled in a signaling complex in which it activates the PI3K gamma complex and which is involved in angiogenesis. Plays a role in the modulation of the cAMP-induced dynamic control of endothelial barrier function through a pathway that is independent on Rho-mediated signaling. Required for the actin rearrangement at cell-cell junctions, such as stress fibers and junctional actin (By similarity).</text>
</comment>
<comment type="subunit">
    <text evidence="2">Interacts with PDE3B and PIK3R6; form a signaling complex that regulates phosphatidylinositol 3-kinase gamma in angiogenesis.</text>
</comment>
<comment type="interaction">
    <interactant intactId="EBI-6902706">
        <id>Q8VCC8</id>
    </interactant>
    <interactant intactId="EBI-6902745">
        <id>E9Q9K8</id>
        <label>Akap6</label>
    </interactant>
    <organismsDiffer>false</organismsDiffer>
    <experiments>2</experiments>
</comment>
<comment type="subcellular location">
    <subcellularLocation>
        <location>Cytoplasm</location>
    </subcellularLocation>
    <subcellularLocation>
        <location evidence="1">Membrane</location>
        <topology evidence="1">Peripheral membrane protein</topology>
    </subcellularLocation>
</comment>
<comment type="alternative products">
    <event type="alternative splicing"/>
    <isoform>
        <id>Q8VCC8-1</id>
        <name>1</name>
        <sequence type="displayed"/>
    </isoform>
    <isoform>
        <id>Q8VCC8-2</id>
        <name>2</name>
        <sequence type="described" ref="VSP_007610"/>
    </isoform>
</comment>
<comment type="domain">
    <text evidence="1">The DEP domain is involved in membrane localization independent from regulation by cAMP.</text>
</comment>
<comment type="caution">
    <text evidence="9">It is uncertain whether Met-1 or Met-43 is the initiator.</text>
</comment>
<comment type="sequence caution" evidence="9">
    <conflict type="erroneous initiation">
        <sequence resource="EMBL-CDS" id="AAH20532"/>
    </conflict>
</comment>
<gene>
    <name type="primary">Rapgef3</name>
    <name type="synonym">Epac</name>
    <name type="synonym">Epac1</name>
</gene>